<reference key="1">
    <citation type="journal article" date="2008" name="PLoS ONE">
        <title>Genome biology of Actinobacillus pleuropneumoniae JL03, an isolate of serotype 3 prevalent in China.</title>
        <authorList>
            <person name="Xu Z."/>
            <person name="Zhou Y."/>
            <person name="Li L."/>
            <person name="Zhou R."/>
            <person name="Xiao S."/>
            <person name="Wan Y."/>
            <person name="Zhang S."/>
            <person name="Wang K."/>
            <person name="Li W."/>
            <person name="Li L."/>
            <person name="Jin H."/>
            <person name="Kang M."/>
            <person name="Dalai B."/>
            <person name="Li T."/>
            <person name="Liu L."/>
            <person name="Cheng Y."/>
            <person name="Zhang L."/>
            <person name="Xu T."/>
            <person name="Zheng H."/>
            <person name="Pu S."/>
            <person name="Wang B."/>
            <person name="Gu W."/>
            <person name="Zhang X.L."/>
            <person name="Zhu G.-F."/>
            <person name="Wang S."/>
            <person name="Zhao G.-P."/>
            <person name="Chen H."/>
        </authorList>
    </citation>
    <scope>NUCLEOTIDE SEQUENCE [LARGE SCALE GENOMIC DNA]</scope>
    <source>
        <strain>JL03</strain>
    </source>
</reference>
<name>LIPA_ACTPJ</name>
<sequence>MTTATGTKPKKMEAFKMERGVKYRDAAKTSVIQVRNIDPDQELLPKPSWMKIKLPAASAKIDSIKHGMRRHGLHSVCEEASCPNLHECFNHGTATFMIMGAICTRRCPFCDVAHGKPLPLDLEEPRKVAETVQDMKLKYVVITSVDRDDLADRGAAHFAATVREIKALNPECKVEILVPDFRGRVEQAVEILKQNPPDVFNHNLENVPRLYREVRPGADYKWSLELLKIFKQEFPNIPTKSGLMVGLGETNEEILEVMQDLRDHGVTMLTIGQYLQPSRHHLKVERYVPPEEFDMFRSEAERMGFEHAACGPFVRSSYHADLQAKGELVK</sequence>
<comment type="function">
    <text evidence="1">Catalyzes the radical-mediated insertion of two sulfur atoms into the C-6 and C-8 positions of the octanoyl moiety bound to the lipoyl domains of lipoate-dependent enzymes, thereby converting the octanoylated domains into lipoylated derivatives.</text>
</comment>
<comment type="catalytic activity">
    <reaction evidence="1">
        <text>[[Fe-S] cluster scaffold protein carrying a second [4Fe-4S](2+) cluster] + N(6)-octanoyl-L-lysyl-[protein] + 2 oxidized [2Fe-2S]-[ferredoxin] + 2 S-adenosyl-L-methionine + 4 H(+) = [[Fe-S] cluster scaffold protein] + N(6)-[(R)-dihydrolipoyl]-L-lysyl-[protein] + 4 Fe(3+) + 2 hydrogen sulfide + 2 5'-deoxyadenosine + 2 L-methionine + 2 reduced [2Fe-2S]-[ferredoxin]</text>
        <dbReference type="Rhea" id="RHEA:16585"/>
        <dbReference type="Rhea" id="RHEA-COMP:9928"/>
        <dbReference type="Rhea" id="RHEA-COMP:10000"/>
        <dbReference type="Rhea" id="RHEA-COMP:10001"/>
        <dbReference type="Rhea" id="RHEA-COMP:10475"/>
        <dbReference type="Rhea" id="RHEA-COMP:14568"/>
        <dbReference type="Rhea" id="RHEA-COMP:14569"/>
        <dbReference type="ChEBI" id="CHEBI:15378"/>
        <dbReference type="ChEBI" id="CHEBI:17319"/>
        <dbReference type="ChEBI" id="CHEBI:29034"/>
        <dbReference type="ChEBI" id="CHEBI:29919"/>
        <dbReference type="ChEBI" id="CHEBI:33722"/>
        <dbReference type="ChEBI" id="CHEBI:33737"/>
        <dbReference type="ChEBI" id="CHEBI:33738"/>
        <dbReference type="ChEBI" id="CHEBI:57844"/>
        <dbReference type="ChEBI" id="CHEBI:59789"/>
        <dbReference type="ChEBI" id="CHEBI:78809"/>
        <dbReference type="ChEBI" id="CHEBI:83100"/>
        <dbReference type="EC" id="2.8.1.8"/>
    </reaction>
</comment>
<comment type="cofactor">
    <cofactor evidence="1">
        <name>[4Fe-4S] cluster</name>
        <dbReference type="ChEBI" id="CHEBI:49883"/>
    </cofactor>
    <text evidence="1">Binds 2 [4Fe-4S] clusters per subunit. One cluster is coordinated with 3 cysteines and an exchangeable S-adenosyl-L-methionine.</text>
</comment>
<comment type="pathway">
    <text evidence="1">Protein modification; protein lipoylation via endogenous pathway; protein N(6)-(lipoyl)lysine from octanoyl-[acyl-carrier-protein]: step 2/2.</text>
</comment>
<comment type="subcellular location">
    <subcellularLocation>
        <location evidence="1">Cytoplasm</location>
    </subcellularLocation>
</comment>
<comment type="similarity">
    <text evidence="1">Belongs to the radical SAM superfamily. Lipoyl synthase family.</text>
</comment>
<feature type="chain" id="PRO_1000099586" description="Lipoyl synthase">
    <location>
        <begin position="1"/>
        <end position="330"/>
    </location>
</feature>
<feature type="domain" description="Radical SAM core" evidence="2">
    <location>
        <begin position="89"/>
        <end position="306"/>
    </location>
</feature>
<feature type="binding site" evidence="1">
    <location>
        <position position="77"/>
    </location>
    <ligand>
        <name>[4Fe-4S] cluster</name>
        <dbReference type="ChEBI" id="CHEBI:49883"/>
        <label>1</label>
    </ligand>
</feature>
<feature type="binding site" evidence="1">
    <location>
        <position position="82"/>
    </location>
    <ligand>
        <name>[4Fe-4S] cluster</name>
        <dbReference type="ChEBI" id="CHEBI:49883"/>
        <label>1</label>
    </ligand>
</feature>
<feature type="binding site" evidence="1">
    <location>
        <position position="88"/>
    </location>
    <ligand>
        <name>[4Fe-4S] cluster</name>
        <dbReference type="ChEBI" id="CHEBI:49883"/>
        <label>1</label>
    </ligand>
</feature>
<feature type="binding site" evidence="1">
    <location>
        <position position="103"/>
    </location>
    <ligand>
        <name>[4Fe-4S] cluster</name>
        <dbReference type="ChEBI" id="CHEBI:49883"/>
        <label>2</label>
        <note>4Fe-4S-S-AdoMet</note>
    </ligand>
</feature>
<feature type="binding site" evidence="1">
    <location>
        <position position="107"/>
    </location>
    <ligand>
        <name>[4Fe-4S] cluster</name>
        <dbReference type="ChEBI" id="CHEBI:49883"/>
        <label>2</label>
        <note>4Fe-4S-S-AdoMet</note>
    </ligand>
</feature>
<feature type="binding site" evidence="1">
    <location>
        <position position="110"/>
    </location>
    <ligand>
        <name>[4Fe-4S] cluster</name>
        <dbReference type="ChEBI" id="CHEBI:49883"/>
        <label>2</label>
        <note>4Fe-4S-S-AdoMet</note>
    </ligand>
</feature>
<feature type="binding site" evidence="1">
    <location>
        <position position="317"/>
    </location>
    <ligand>
        <name>[4Fe-4S] cluster</name>
        <dbReference type="ChEBI" id="CHEBI:49883"/>
        <label>1</label>
    </ligand>
</feature>
<gene>
    <name evidence="1" type="primary">lipA</name>
    <name type="ordered locus">APJL_1626</name>
</gene>
<protein>
    <recommendedName>
        <fullName evidence="1">Lipoyl synthase</fullName>
        <ecNumber evidence="1">2.8.1.8</ecNumber>
    </recommendedName>
    <alternativeName>
        <fullName evidence="1">Lip-syn</fullName>
        <shortName evidence="1">LS</shortName>
    </alternativeName>
    <alternativeName>
        <fullName evidence="1">Lipoate synthase</fullName>
    </alternativeName>
    <alternativeName>
        <fullName evidence="1">Lipoic acid synthase</fullName>
    </alternativeName>
    <alternativeName>
        <fullName evidence="1">Sulfur insertion protein LipA</fullName>
    </alternativeName>
</protein>
<keyword id="KW-0004">4Fe-4S</keyword>
<keyword id="KW-0963">Cytoplasm</keyword>
<keyword id="KW-0408">Iron</keyword>
<keyword id="KW-0411">Iron-sulfur</keyword>
<keyword id="KW-0479">Metal-binding</keyword>
<keyword id="KW-0949">S-adenosyl-L-methionine</keyword>
<keyword id="KW-0808">Transferase</keyword>
<dbReference type="EC" id="2.8.1.8" evidence="1"/>
<dbReference type="EMBL" id="CP000687">
    <property type="protein sequence ID" value="ABY70178.1"/>
    <property type="molecule type" value="Genomic_DNA"/>
</dbReference>
<dbReference type="RefSeq" id="WP_012263304.1">
    <property type="nucleotide sequence ID" value="NC_010278.1"/>
</dbReference>
<dbReference type="SMR" id="B0BRR9"/>
<dbReference type="KEGG" id="apj:APJL_1626"/>
<dbReference type="HOGENOM" id="CLU_033144_2_1_6"/>
<dbReference type="UniPathway" id="UPA00538">
    <property type="reaction ID" value="UER00593"/>
</dbReference>
<dbReference type="Proteomes" id="UP000008547">
    <property type="component" value="Chromosome"/>
</dbReference>
<dbReference type="GO" id="GO:0005737">
    <property type="term" value="C:cytoplasm"/>
    <property type="evidence" value="ECO:0007669"/>
    <property type="project" value="UniProtKB-SubCell"/>
</dbReference>
<dbReference type="GO" id="GO:0051539">
    <property type="term" value="F:4 iron, 4 sulfur cluster binding"/>
    <property type="evidence" value="ECO:0007669"/>
    <property type="project" value="UniProtKB-UniRule"/>
</dbReference>
<dbReference type="GO" id="GO:0016992">
    <property type="term" value="F:lipoate synthase activity"/>
    <property type="evidence" value="ECO:0007669"/>
    <property type="project" value="UniProtKB-UniRule"/>
</dbReference>
<dbReference type="GO" id="GO:0046872">
    <property type="term" value="F:metal ion binding"/>
    <property type="evidence" value="ECO:0007669"/>
    <property type="project" value="UniProtKB-KW"/>
</dbReference>
<dbReference type="CDD" id="cd01335">
    <property type="entry name" value="Radical_SAM"/>
    <property type="match status" value="1"/>
</dbReference>
<dbReference type="FunFam" id="3.20.20.70:FF:000023">
    <property type="entry name" value="Lipoyl synthase"/>
    <property type="match status" value="1"/>
</dbReference>
<dbReference type="Gene3D" id="3.20.20.70">
    <property type="entry name" value="Aldolase class I"/>
    <property type="match status" value="1"/>
</dbReference>
<dbReference type="HAMAP" id="MF_00206">
    <property type="entry name" value="Lipoyl_synth"/>
    <property type="match status" value="1"/>
</dbReference>
<dbReference type="InterPro" id="IPR013785">
    <property type="entry name" value="Aldolase_TIM"/>
</dbReference>
<dbReference type="InterPro" id="IPR006638">
    <property type="entry name" value="Elp3/MiaA/NifB-like_rSAM"/>
</dbReference>
<dbReference type="InterPro" id="IPR003698">
    <property type="entry name" value="Lipoyl_synth"/>
</dbReference>
<dbReference type="InterPro" id="IPR007197">
    <property type="entry name" value="rSAM"/>
</dbReference>
<dbReference type="NCBIfam" id="TIGR00510">
    <property type="entry name" value="lipA"/>
    <property type="match status" value="1"/>
</dbReference>
<dbReference type="NCBIfam" id="NF004019">
    <property type="entry name" value="PRK05481.1"/>
    <property type="match status" value="1"/>
</dbReference>
<dbReference type="NCBIfam" id="NF009544">
    <property type="entry name" value="PRK12928.1"/>
    <property type="match status" value="1"/>
</dbReference>
<dbReference type="PANTHER" id="PTHR10949">
    <property type="entry name" value="LIPOYL SYNTHASE"/>
    <property type="match status" value="1"/>
</dbReference>
<dbReference type="PANTHER" id="PTHR10949:SF0">
    <property type="entry name" value="LIPOYL SYNTHASE, MITOCHONDRIAL"/>
    <property type="match status" value="1"/>
</dbReference>
<dbReference type="Pfam" id="PF04055">
    <property type="entry name" value="Radical_SAM"/>
    <property type="match status" value="1"/>
</dbReference>
<dbReference type="PIRSF" id="PIRSF005963">
    <property type="entry name" value="Lipoyl_synth"/>
    <property type="match status" value="1"/>
</dbReference>
<dbReference type="SFLD" id="SFLDF00271">
    <property type="entry name" value="lipoyl_synthase"/>
    <property type="match status" value="1"/>
</dbReference>
<dbReference type="SFLD" id="SFLDS00029">
    <property type="entry name" value="Radical_SAM"/>
    <property type="match status" value="1"/>
</dbReference>
<dbReference type="SMART" id="SM00729">
    <property type="entry name" value="Elp3"/>
    <property type="match status" value="1"/>
</dbReference>
<dbReference type="SUPFAM" id="SSF102114">
    <property type="entry name" value="Radical SAM enzymes"/>
    <property type="match status" value="1"/>
</dbReference>
<dbReference type="PROSITE" id="PS51918">
    <property type="entry name" value="RADICAL_SAM"/>
    <property type="match status" value="1"/>
</dbReference>
<organism>
    <name type="scientific">Actinobacillus pleuropneumoniae serotype 3 (strain JL03)</name>
    <dbReference type="NCBI Taxonomy" id="434271"/>
    <lineage>
        <taxon>Bacteria</taxon>
        <taxon>Pseudomonadati</taxon>
        <taxon>Pseudomonadota</taxon>
        <taxon>Gammaproteobacteria</taxon>
        <taxon>Pasteurellales</taxon>
        <taxon>Pasteurellaceae</taxon>
        <taxon>Actinobacillus</taxon>
    </lineage>
</organism>
<evidence type="ECO:0000255" key="1">
    <source>
        <dbReference type="HAMAP-Rule" id="MF_00206"/>
    </source>
</evidence>
<evidence type="ECO:0000255" key="2">
    <source>
        <dbReference type="PROSITE-ProRule" id="PRU01266"/>
    </source>
</evidence>
<accession>B0BRR9</accession>
<proteinExistence type="inferred from homology"/>